<organism>
    <name type="scientific">Magnetococcus marinus (strain ATCC BAA-1437 / JCM 17883 / MC-1)</name>
    <dbReference type="NCBI Taxonomy" id="156889"/>
    <lineage>
        <taxon>Bacteria</taxon>
        <taxon>Pseudomonadati</taxon>
        <taxon>Pseudomonadota</taxon>
        <taxon>Alphaproteobacteria</taxon>
        <taxon>Magnetococcales</taxon>
        <taxon>Magnetococcaceae</taxon>
        <taxon>Magnetococcus</taxon>
    </lineage>
</organism>
<protein>
    <recommendedName>
        <fullName evidence="1">Elongation factor Ts</fullName>
        <shortName evidence="1">EF-Ts</shortName>
    </recommendedName>
</protein>
<comment type="function">
    <text evidence="1">Associates with the EF-Tu.GDP complex and induces the exchange of GDP to GTP. It remains bound to the aminoacyl-tRNA.EF-Tu.GTP complex up to the GTP hydrolysis stage on the ribosome.</text>
</comment>
<comment type="subcellular location">
    <subcellularLocation>
        <location evidence="1">Cytoplasm</location>
    </subcellularLocation>
</comment>
<comment type="similarity">
    <text evidence="1">Belongs to the EF-Ts family.</text>
</comment>
<name>EFTS_MAGMM</name>
<sequence>MAVTASMVKELREKTGVGMMDCKKALAETGGDMEAAVDWLRKKGMASAQKKSARVAAEGKVTTLSLGSVGVMLEVNAETDFTAKNDNFCTFADTATKLAADNGCTDIDTLKALDYPGTGRNVGDELTNLIATIGENMNLRRIERMEVSSGLVSSYIHAGGKIGVLVALESTASADALQELGKKLAMHVAAAAPQFLNRDSVDSEAMEREKSVLIDQARASGKPDNIIEKMIVGRMDKYYADVCLLEQAYVIDPDHKVQQVVDAAAKELGCPVKVTGYARFQLGEGIEKKEEDFAAEVAKVVQG</sequence>
<reference key="1">
    <citation type="journal article" date="2009" name="Appl. Environ. Microbiol.">
        <title>Complete genome sequence of the chemolithoautotrophic marine magnetotactic coccus strain MC-1.</title>
        <authorList>
            <person name="Schubbe S."/>
            <person name="Williams T.J."/>
            <person name="Xie G."/>
            <person name="Kiss H.E."/>
            <person name="Brettin T.S."/>
            <person name="Martinez D."/>
            <person name="Ross C.A."/>
            <person name="Schuler D."/>
            <person name="Cox B.L."/>
            <person name="Nealson K.H."/>
            <person name="Bazylinski D.A."/>
        </authorList>
    </citation>
    <scope>NUCLEOTIDE SEQUENCE [LARGE SCALE GENOMIC DNA]</scope>
    <source>
        <strain>ATCC BAA-1437 / JCM 17883 / MC-1</strain>
    </source>
</reference>
<dbReference type="EMBL" id="CP000471">
    <property type="protein sequence ID" value="ABK44349.1"/>
    <property type="molecule type" value="Genomic_DNA"/>
</dbReference>
<dbReference type="RefSeq" id="WP_011713493.1">
    <property type="nucleotide sequence ID" value="NC_008576.1"/>
</dbReference>
<dbReference type="SMR" id="A0L8Q6"/>
<dbReference type="STRING" id="156889.Mmc1_1841"/>
<dbReference type="KEGG" id="mgm:Mmc1_1841"/>
<dbReference type="eggNOG" id="COG0264">
    <property type="taxonomic scope" value="Bacteria"/>
</dbReference>
<dbReference type="HOGENOM" id="CLU_047155_0_0_5"/>
<dbReference type="OrthoDB" id="9808348at2"/>
<dbReference type="Proteomes" id="UP000002586">
    <property type="component" value="Chromosome"/>
</dbReference>
<dbReference type="GO" id="GO:0005737">
    <property type="term" value="C:cytoplasm"/>
    <property type="evidence" value="ECO:0007669"/>
    <property type="project" value="UniProtKB-SubCell"/>
</dbReference>
<dbReference type="GO" id="GO:0003746">
    <property type="term" value="F:translation elongation factor activity"/>
    <property type="evidence" value="ECO:0007669"/>
    <property type="project" value="UniProtKB-UniRule"/>
</dbReference>
<dbReference type="CDD" id="cd14275">
    <property type="entry name" value="UBA_EF-Ts"/>
    <property type="match status" value="1"/>
</dbReference>
<dbReference type="FunFam" id="1.10.286.20:FF:000001">
    <property type="entry name" value="Elongation factor Ts"/>
    <property type="match status" value="1"/>
</dbReference>
<dbReference type="FunFam" id="1.10.8.10:FF:000001">
    <property type="entry name" value="Elongation factor Ts"/>
    <property type="match status" value="1"/>
</dbReference>
<dbReference type="Gene3D" id="1.10.286.20">
    <property type="match status" value="1"/>
</dbReference>
<dbReference type="Gene3D" id="1.10.8.10">
    <property type="entry name" value="DNA helicase RuvA subunit, C-terminal domain"/>
    <property type="match status" value="1"/>
</dbReference>
<dbReference type="Gene3D" id="3.30.479.20">
    <property type="entry name" value="Elongation factor Ts, dimerisation domain"/>
    <property type="match status" value="2"/>
</dbReference>
<dbReference type="HAMAP" id="MF_00050">
    <property type="entry name" value="EF_Ts"/>
    <property type="match status" value="1"/>
</dbReference>
<dbReference type="InterPro" id="IPR036402">
    <property type="entry name" value="EF-Ts_dimer_sf"/>
</dbReference>
<dbReference type="InterPro" id="IPR001816">
    <property type="entry name" value="Transl_elong_EFTs/EF1B"/>
</dbReference>
<dbReference type="InterPro" id="IPR014039">
    <property type="entry name" value="Transl_elong_EFTs/EF1B_dimer"/>
</dbReference>
<dbReference type="InterPro" id="IPR018101">
    <property type="entry name" value="Transl_elong_Ts_CS"/>
</dbReference>
<dbReference type="InterPro" id="IPR009060">
    <property type="entry name" value="UBA-like_sf"/>
</dbReference>
<dbReference type="NCBIfam" id="TIGR00116">
    <property type="entry name" value="tsf"/>
    <property type="match status" value="1"/>
</dbReference>
<dbReference type="PANTHER" id="PTHR11741">
    <property type="entry name" value="ELONGATION FACTOR TS"/>
    <property type="match status" value="1"/>
</dbReference>
<dbReference type="PANTHER" id="PTHR11741:SF0">
    <property type="entry name" value="ELONGATION FACTOR TS, MITOCHONDRIAL"/>
    <property type="match status" value="1"/>
</dbReference>
<dbReference type="Pfam" id="PF00889">
    <property type="entry name" value="EF_TS"/>
    <property type="match status" value="1"/>
</dbReference>
<dbReference type="SUPFAM" id="SSF54713">
    <property type="entry name" value="Elongation factor Ts (EF-Ts), dimerisation domain"/>
    <property type="match status" value="2"/>
</dbReference>
<dbReference type="SUPFAM" id="SSF46934">
    <property type="entry name" value="UBA-like"/>
    <property type="match status" value="1"/>
</dbReference>
<dbReference type="PROSITE" id="PS01126">
    <property type="entry name" value="EF_TS_1"/>
    <property type="match status" value="1"/>
</dbReference>
<gene>
    <name evidence="1" type="primary">tsf</name>
    <name type="ordered locus">Mmc1_1841</name>
</gene>
<feature type="chain" id="PRO_0000323455" description="Elongation factor Ts">
    <location>
        <begin position="1"/>
        <end position="303"/>
    </location>
</feature>
<feature type="region of interest" description="Involved in Mg(2+) ion dislocation from EF-Tu" evidence="1">
    <location>
        <begin position="79"/>
        <end position="82"/>
    </location>
</feature>
<evidence type="ECO:0000255" key="1">
    <source>
        <dbReference type="HAMAP-Rule" id="MF_00050"/>
    </source>
</evidence>
<proteinExistence type="inferred from homology"/>
<keyword id="KW-0963">Cytoplasm</keyword>
<keyword id="KW-0251">Elongation factor</keyword>
<keyword id="KW-0648">Protein biosynthesis</keyword>
<keyword id="KW-1185">Reference proteome</keyword>
<accession>A0L8Q6</accession>